<organism>
    <name type="scientific">Theileria parva</name>
    <name type="common">East coast fever infection agent</name>
    <dbReference type="NCBI Taxonomy" id="5875"/>
    <lineage>
        <taxon>Eukaryota</taxon>
        <taxon>Sar</taxon>
        <taxon>Alveolata</taxon>
        <taxon>Apicomplexa</taxon>
        <taxon>Aconoidasida</taxon>
        <taxon>Piroplasmida</taxon>
        <taxon>Theileriidae</taxon>
        <taxon>Theileria</taxon>
    </lineage>
</organism>
<reference key="1">
    <citation type="journal article" date="1994" name="EMBO J.">
        <title>A 7.1 kb linear DNA molecule of Theileria parva has scrambled rDNA sequences and open reading frames for mitochondrially-encoded proteins.</title>
        <authorList>
            <person name="Kairo A."/>
            <person name="Fairlamb A."/>
            <person name="Gobright E."/>
            <person name="Nene V."/>
        </authorList>
    </citation>
    <scope>NUCLEOTIDE SEQUENCE [LARGE SCALE GENOMIC DNA]</scope>
    <source>
        <strain>Muguga</strain>
    </source>
</reference>
<geneLocation type="mitochondrion"/>
<protein>
    <recommendedName>
        <fullName>Cytochrome b</fullName>
    </recommendedName>
    <alternativeName>
        <fullName>Complex III subunit 3</fullName>
    </alternativeName>
    <alternativeName>
        <fullName>Complex III subunit III</fullName>
    </alternativeName>
    <alternativeName>
        <fullName>Cytochrome b-c1 complex subunit 3</fullName>
    </alternativeName>
    <alternativeName>
        <fullName>Ubiquinol-cytochrome-c reductase complex cytochrome b subunit</fullName>
    </alternativeName>
</protein>
<name>CYB_THEPA</name>
<gene>
    <name type="primary">MT-CYB</name>
    <name type="synonym">COB</name>
    <name type="synonym">CYTB</name>
    <name type="synonym">MTCYB</name>
</gene>
<proteinExistence type="inferred from homology"/>
<feature type="chain" id="PRO_0000232682" description="Cytochrome b">
    <location>
        <begin position="1"/>
        <end position="363"/>
    </location>
</feature>
<feature type="transmembrane region" description="Helical" evidence="3">
    <location>
        <begin position="23"/>
        <end position="43"/>
    </location>
</feature>
<feature type="transmembrane region" description="Helical" evidence="3">
    <location>
        <begin position="67"/>
        <end position="89"/>
    </location>
</feature>
<feature type="transmembrane region" description="Helical" evidence="3">
    <location>
        <begin position="102"/>
        <end position="122"/>
    </location>
</feature>
<feature type="transmembrane region" description="Helical" evidence="3">
    <location>
        <begin position="164"/>
        <end position="184"/>
    </location>
</feature>
<feature type="transmembrane region" description="Helical" evidence="3">
    <location>
        <begin position="210"/>
        <end position="230"/>
    </location>
</feature>
<feature type="transmembrane region" description="Helical" evidence="4">
    <location>
        <begin position="271"/>
        <end position="291"/>
    </location>
</feature>
<feature type="transmembrane region" description="Helical" evidence="4">
    <location>
        <begin position="309"/>
        <end position="329"/>
    </location>
</feature>
<feature type="transmembrane region" description="Helical" evidence="4">
    <location>
        <begin position="332"/>
        <end position="352"/>
    </location>
</feature>
<feature type="binding site" description="axial binding residue" evidence="6">
    <location>
        <position position="73"/>
    </location>
    <ligand>
        <name>heme b</name>
        <dbReference type="ChEBI" id="CHEBI:60344"/>
        <label>b562</label>
    </ligand>
    <ligandPart>
        <name>Fe</name>
        <dbReference type="ChEBI" id="CHEBI:18248"/>
    </ligandPart>
</feature>
<feature type="binding site" description="axial binding residue" evidence="6">
    <location>
        <position position="87"/>
    </location>
    <ligand>
        <name>heme b</name>
        <dbReference type="ChEBI" id="CHEBI:60344"/>
        <label>b566</label>
    </ligand>
    <ligandPart>
        <name>Fe</name>
        <dbReference type="ChEBI" id="CHEBI:18248"/>
    </ligandPart>
</feature>
<feature type="binding site" description="axial binding residue" evidence="6">
    <location>
        <position position="168"/>
    </location>
    <ligand>
        <name>heme b</name>
        <dbReference type="ChEBI" id="CHEBI:60344"/>
        <label>b562</label>
    </ligand>
    <ligandPart>
        <name>Fe</name>
        <dbReference type="ChEBI" id="CHEBI:18248"/>
    </ligandPart>
</feature>
<feature type="binding site" description="axial binding residue" evidence="6">
    <location>
        <position position="182"/>
    </location>
    <ligand>
        <name>heme b</name>
        <dbReference type="ChEBI" id="CHEBI:60344"/>
        <label>b566</label>
    </ligand>
    <ligandPart>
        <name>Fe</name>
        <dbReference type="ChEBI" id="CHEBI:18248"/>
    </ligandPart>
</feature>
<feature type="binding site" evidence="2">
    <location>
        <position position="187"/>
    </location>
    <ligand>
        <name>a ubiquinone</name>
        <dbReference type="ChEBI" id="CHEBI:16389"/>
    </ligand>
</feature>
<sequence length="363" mass="40985">MNMFNAHIPSYLVPKNLNSNWNVGFILGILLILQILSGLLLTFFYVPCKEGAFESLSRLVTETQFGWFVRLYHSVGVSFYFFFMFIHIIKGMWYSSKYMPWSWYSGIVILILSIVIAFTGYVLPDGQMSFWGATVISNLLEWFGKAKVITFGGFTVGPETLKRFFILHFVLPAVVLVIVLLHLYFLHREGSSNPLTLAEAVALLKFYQLILFSDVKFLVIISMFIGPQVGYGIWTLFQADNDNSILSSSENTPAHIIPEWYLLLFYATLKVFPTKVSGLVAMVVVLKLLIILVESRSKSQAVSTAHHHRVWTTTSVPLVPALFLLGCIGRMVINLDLIIIGIYGVLLSTTFVQKLLDSSRVRA</sequence>
<dbReference type="EMBL" id="Z23263">
    <property type="protein sequence ID" value="CAA80800.1"/>
    <property type="status" value="ALT_INIT"/>
    <property type="molecule type" value="Genomic_DNA"/>
</dbReference>
<dbReference type="PIR" id="S41691">
    <property type="entry name" value="S41691"/>
</dbReference>
<dbReference type="RefSeq" id="YP_001994287.1">
    <property type="nucleotide sequence ID" value="NC_011005.1"/>
</dbReference>
<dbReference type="SMR" id="Q36099"/>
<dbReference type="FunCoup" id="Q36099">
    <property type="interactions" value="29"/>
</dbReference>
<dbReference type="STRING" id="5875.Q36099"/>
<dbReference type="GeneID" id="6741533"/>
<dbReference type="InParanoid" id="Q36099"/>
<dbReference type="GO" id="GO:0005743">
    <property type="term" value="C:mitochondrial inner membrane"/>
    <property type="evidence" value="ECO:0007669"/>
    <property type="project" value="UniProtKB-SubCell"/>
</dbReference>
<dbReference type="GO" id="GO:0046872">
    <property type="term" value="F:metal ion binding"/>
    <property type="evidence" value="ECO:0007669"/>
    <property type="project" value="UniProtKB-KW"/>
</dbReference>
<dbReference type="GO" id="GO:0008121">
    <property type="term" value="F:ubiquinol-cytochrome-c reductase activity"/>
    <property type="evidence" value="ECO:0007669"/>
    <property type="project" value="TreeGrafter"/>
</dbReference>
<dbReference type="GO" id="GO:0006122">
    <property type="term" value="P:mitochondrial electron transport, ubiquinol to cytochrome c"/>
    <property type="evidence" value="ECO:0007669"/>
    <property type="project" value="TreeGrafter"/>
</dbReference>
<dbReference type="Gene3D" id="1.20.810.10">
    <property type="entry name" value="Cytochrome Bc1 Complex, Chain C"/>
    <property type="match status" value="1"/>
</dbReference>
<dbReference type="InterPro" id="IPR005798">
    <property type="entry name" value="Cyt_b/b6_C"/>
</dbReference>
<dbReference type="InterPro" id="IPR036150">
    <property type="entry name" value="Cyt_b/b6_C_sf"/>
</dbReference>
<dbReference type="InterPro" id="IPR005797">
    <property type="entry name" value="Cyt_b/b6_N"/>
</dbReference>
<dbReference type="InterPro" id="IPR027387">
    <property type="entry name" value="Cytb/b6-like_sf"/>
</dbReference>
<dbReference type="InterPro" id="IPR016174">
    <property type="entry name" value="Di-haem_cyt_TM"/>
</dbReference>
<dbReference type="PANTHER" id="PTHR19271">
    <property type="entry name" value="CYTOCHROME B"/>
    <property type="match status" value="1"/>
</dbReference>
<dbReference type="PANTHER" id="PTHR19271:SF16">
    <property type="entry name" value="CYTOCHROME B"/>
    <property type="match status" value="1"/>
</dbReference>
<dbReference type="Pfam" id="PF00032">
    <property type="entry name" value="Cytochrom_B_C"/>
    <property type="match status" value="1"/>
</dbReference>
<dbReference type="Pfam" id="PF00033">
    <property type="entry name" value="Cytochrome_B"/>
    <property type="match status" value="1"/>
</dbReference>
<dbReference type="SUPFAM" id="SSF81648">
    <property type="entry name" value="a domain/subunit of cytochrome bc1 complex (Ubiquinol-cytochrome c reductase)"/>
    <property type="match status" value="1"/>
</dbReference>
<dbReference type="SUPFAM" id="SSF81342">
    <property type="entry name" value="Transmembrane di-heme cytochromes"/>
    <property type="match status" value="1"/>
</dbReference>
<dbReference type="PROSITE" id="PS51003">
    <property type="entry name" value="CYTB_CTER"/>
    <property type="match status" value="1"/>
</dbReference>
<dbReference type="PROSITE" id="PS51002">
    <property type="entry name" value="CYTB_NTER"/>
    <property type="match status" value="1"/>
</dbReference>
<comment type="function">
    <text evidence="3">Component of the ubiquinol-cytochrome c reductase complex (complex III or cytochrome b-c1 complex) that is part of the mitochondrial respiratory chain. The b-c1 complex mediates electron transfer from ubiquinol to cytochrome c. Contributes to the generation of a proton gradient across the mitochondrial membrane that is then used for ATP synthesis.</text>
</comment>
<comment type="cofactor">
    <cofactor evidence="3">
        <name>heme b</name>
        <dbReference type="ChEBI" id="CHEBI:60344"/>
    </cofactor>
    <text evidence="3">Binds 2 heme b groups non-covalently.</text>
</comment>
<comment type="subunit">
    <text evidence="1">The main subunits of complex b-c1 are: cytochrome b, cytochrome c1 and the Rieske protein.</text>
</comment>
<comment type="subcellular location">
    <subcellularLocation>
        <location evidence="3">Mitochondrion inner membrane</location>
        <topology evidence="3">Multi-pass membrane protein</topology>
    </subcellularLocation>
</comment>
<comment type="miscellaneous">
    <text evidence="1">Heme 1 (or BL or b562) is low-potential and absorbs at about 562 nm, and heme 2 (or BH or b566) is high-potential and absorbs at about 566 nm.</text>
</comment>
<comment type="similarity">
    <text evidence="5 6">Belongs to the cytochrome b family.</text>
</comment>
<comment type="caution">
    <text evidence="3">The protein contains an even number of transmembrane helices, fewer than predicted by bioinformatics tools.</text>
</comment>
<comment type="sequence caution" evidence="7">
    <conflict type="erroneous initiation">
        <sequence resource="EMBL-CDS" id="CAA80800"/>
    </conflict>
</comment>
<keyword id="KW-0249">Electron transport</keyword>
<keyword id="KW-0349">Heme</keyword>
<keyword id="KW-0408">Iron</keyword>
<keyword id="KW-0472">Membrane</keyword>
<keyword id="KW-0479">Metal-binding</keyword>
<keyword id="KW-0496">Mitochondrion</keyword>
<keyword id="KW-0999">Mitochondrion inner membrane</keyword>
<keyword id="KW-0679">Respiratory chain</keyword>
<keyword id="KW-0812">Transmembrane</keyword>
<keyword id="KW-1133">Transmembrane helix</keyword>
<keyword id="KW-0813">Transport</keyword>
<keyword id="KW-0830">Ubiquinone</keyword>
<evidence type="ECO:0000250" key="1"/>
<evidence type="ECO:0000250" key="2">
    <source>
        <dbReference type="UniProtKB" id="P00157"/>
    </source>
</evidence>
<evidence type="ECO:0000250" key="3">
    <source>
        <dbReference type="UniProtKB" id="P00163"/>
    </source>
</evidence>
<evidence type="ECO:0000255" key="4"/>
<evidence type="ECO:0000255" key="5">
    <source>
        <dbReference type="PROSITE-ProRule" id="PRU00967"/>
    </source>
</evidence>
<evidence type="ECO:0000255" key="6">
    <source>
        <dbReference type="PROSITE-ProRule" id="PRU00968"/>
    </source>
</evidence>
<evidence type="ECO:0000305" key="7"/>
<accession>Q36099</accession>